<name>SYR_SALNS</name>
<proteinExistence type="inferred from homology"/>
<dbReference type="EC" id="6.1.1.19" evidence="1"/>
<dbReference type="EMBL" id="CP001113">
    <property type="protein sequence ID" value="ACF62302.1"/>
    <property type="molecule type" value="Genomic_DNA"/>
</dbReference>
<dbReference type="RefSeq" id="WP_001025360.1">
    <property type="nucleotide sequence ID" value="NZ_CCMR01000003.1"/>
</dbReference>
<dbReference type="SMR" id="B4SVG0"/>
<dbReference type="KEGG" id="see:SNSL254_A2069"/>
<dbReference type="HOGENOM" id="CLU_006406_5_1_6"/>
<dbReference type="Proteomes" id="UP000008824">
    <property type="component" value="Chromosome"/>
</dbReference>
<dbReference type="GO" id="GO:0005737">
    <property type="term" value="C:cytoplasm"/>
    <property type="evidence" value="ECO:0007669"/>
    <property type="project" value="UniProtKB-SubCell"/>
</dbReference>
<dbReference type="GO" id="GO:0004814">
    <property type="term" value="F:arginine-tRNA ligase activity"/>
    <property type="evidence" value="ECO:0007669"/>
    <property type="project" value="UniProtKB-UniRule"/>
</dbReference>
<dbReference type="GO" id="GO:0005524">
    <property type="term" value="F:ATP binding"/>
    <property type="evidence" value="ECO:0007669"/>
    <property type="project" value="UniProtKB-UniRule"/>
</dbReference>
<dbReference type="GO" id="GO:0006420">
    <property type="term" value="P:arginyl-tRNA aminoacylation"/>
    <property type="evidence" value="ECO:0007669"/>
    <property type="project" value="UniProtKB-UniRule"/>
</dbReference>
<dbReference type="CDD" id="cd07956">
    <property type="entry name" value="Anticodon_Ia_Arg"/>
    <property type="match status" value="1"/>
</dbReference>
<dbReference type="CDD" id="cd00671">
    <property type="entry name" value="ArgRS_core"/>
    <property type="match status" value="1"/>
</dbReference>
<dbReference type="FunFam" id="1.10.730.10:FF:000001">
    <property type="entry name" value="Arginine--tRNA ligase"/>
    <property type="match status" value="1"/>
</dbReference>
<dbReference type="FunFam" id="3.30.1360.70:FF:000001">
    <property type="entry name" value="Arginine--tRNA ligase"/>
    <property type="match status" value="1"/>
</dbReference>
<dbReference type="FunFam" id="3.40.50.620:FF:000030">
    <property type="entry name" value="Arginine--tRNA ligase"/>
    <property type="match status" value="1"/>
</dbReference>
<dbReference type="Gene3D" id="3.30.1360.70">
    <property type="entry name" value="Arginyl tRNA synthetase N-terminal domain"/>
    <property type="match status" value="1"/>
</dbReference>
<dbReference type="Gene3D" id="3.40.50.620">
    <property type="entry name" value="HUPs"/>
    <property type="match status" value="1"/>
</dbReference>
<dbReference type="Gene3D" id="1.10.730.10">
    <property type="entry name" value="Isoleucyl-tRNA Synthetase, Domain 1"/>
    <property type="match status" value="1"/>
</dbReference>
<dbReference type="HAMAP" id="MF_00123">
    <property type="entry name" value="Arg_tRNA_synth"/>
    <property type="match status" value="1"/>
</dbReference>
<dbReference type="InterPro" id="IPR001412">
    <property type="entry name" value="aa-tRNA-synth_I_CS"/>
</dbReference>
<dbReference type="InterPro" id="IPR001278">
    <property type="entry name" value="Arg-tRNA-ligase"/>
</dbReference>
<dbReference type="InterPro" id="IPR005148">
    <property type="entry name" value="Arg-tRNA-synth_N"/>
</dbReference>
<dbReference type="InterPro" id="IPR036695">
    <property type="entry name" value="Arg-tRNA-synth_N_sf"/>
</dbReference>
<dbReference type="InterPro" id="IPR035684">
    <property type="entry name" value="ArgRS_core"/>
</dbReference>
<dbReference type="InterPro" id="IPR008909">
    <property type="entry name" value="DALR_anticod-bd"/>
</dbReference>
<dbReference type="InterPro" id="IPR014729">
    <property type="entry name" value="Rossmann-like_a/b/a_fold"/>
</dbReference>
<dbReference type="InterPro" id="IPR009080">
    <property type="entry name" value="tRNAsynth_Ia_anticodon-bd"/>
</dbReference>
<dbReference type="NCBIfam" id="TIGR00456">
    <property type="entry name" value="argS"/>
    <property type="match status" value="1"/>
</dbReference>
<dbReference type="PANTHER" id="PTHR11956:SF5">
    <property type="entry name" value="ARGININE--TRNA LIGASE, CYTOPLASMIC"/>
    <property type="match status" value="1"/>
</dbReference>
<dbReference type="PANTHER" id="PTHR11956">
    <property type="entry name" value="ARGINYL-TRNA SYNTHETASE"/>
    <property type="match status" value="1"/>
</dbReference>
<dbReference type="Pfam" id="PF03485">
    <property type="entry name" value="Arg_tRNA_synt_N"/>
    <property type="match status" value="1"/>
</dbReference>
<dbReference type="Pfam" id="PF05746">
    <property type="entry name" value="DALR_1"/>
    <property type="match status" value="1"/>
</dbReference>
<dbReference type="Pfam" id="PF00750">
    <property type="entry name" value="tRNA-synt_1d"/>
    <property type="match status" value="1"/>
</dbReference>
<dbReference type="PRINTS" id="PR01038">
    <property type="entry name" value="TRNASYNTHARG"/>
</dbReference>
<dbReference type="SMART" id="SM01016">
    <property type="entry name" value="Arg_tRNA_synt_N"/>
    <property type="match status" value="1"/>
</dbReference>
<dbReference type="SMART" id="SM00836">
    <property type="entry name" value="DALR_1"/>
    <property type="match status" value="1"/>
</dbReference>
<dbReference type="SUPFAM" id="SSF47323">
    <property type="entry name" value="Anticodon-binding domain of a subclass of class I aminoacyl-tRNA synthetases"/>
    <property type="match status" value="1"/>
</dbReference>
<dbReference type="SUPFAM" id="SSF55190">
    <property type="entry name" value="Arginyl-tRNA synthetase (ArgRS), N-terminal 'additional' domain"/>
    <property type="match status" value="1"/>
</dbReference>
<dbReference type="SUPFAM" id="SSF52374">
    <property type="entry name" value="Nucleotidylyl transferase"/>
    <property type="match status" value="1"/>
</dbReference>
<dbReference type="PROSITE" id="PS00178">
    <property type="entry name" value="AA_TRNA_LIGASE_I"/>
    <property type="match status" value="1"/>
</dbReference>
<organism>
    <name type="scientific">Salmonella newport (strain SL254)</name>
    <dbReference type="NCBI Taxonomy" id="423368"/>
    <lineage>
        <taxon>Bacteria</taxon>
        <taxon>Pseudomonadati</taxon>
        <taxon>Pseudomonadota</taxon>
        <taxon>Gammaproteobacteria</taxon>
        <taxon>Enterobacterales</taxon>
        <taxon>Enterobacteriaceae</taxon>
        <taxon>Salmonella</taxon>
    </lineage>
</organism>
<evidence type="ECO:0000255" key="1">
    <source>
        <dbReference type="HAMAP-Rule" id="MF_00123"/>
    </source>
</evidence>
<feature type="chain" id="PRO_1000095403" description="Arginine--tRNA ligase">
    <location>
        <begin position="1"/>
        <end position="577"/>
    </location>
</feature>
<feature type="short sequence motif" description="'HIGH' region">
    <location>
        <begin position="122"/>
        <end position="132"/>
    </location>
</feature>
<protein>
    <recommendedName>
        <fullName evidence="1">Arginine--tRNA ligase</fullName>
        <ecNumber evidence="1">6.1.1.19</ecNumber>
    </recommendedName>
    <alternativeName>
        <fullName evidence="1">Arginyl-tRNA synthetase</fullName>
        <shortName evidence="1">ArgRS</shortName>
    </alternativeName>
</protein>
<keyword id="KW-0030">Aminoacyl-tRNA synthetase</keyword>
<keyword id="KW-0067">ATP-binding</keyword>
<keyword id="KW-0963">Cytoplasm</keyword>
<keyword id="KW-0436">Ligase</keyword>
<keyword id="KW-0547">Nucleotide-binding</keyword>
<keyword id="KW-0648">Protein biosynthesis</keyword>
<sequence>MNIQALLSEKVSQAMIAAGAPADCEPQVRQSAKVQFGDYQANGMMAVAKKLGMAPRQLAEQVLTHLDLSGIASKVEIAGPGFINIFLEPAFLAEQVQQALASDRLGVSQPTRQTIVVDYSAPNVAKEMHVGHLRSTIIGDAAVRTLEFLGHHVIRANHVGDWGTQFGMLIAWLEKQQQENAGDMALADLEGFYRDAKKHYDEDEAFAERARNYVVKLQSGDTYFREMWRKLVDITMTQNQITYDRLNVTLTRDDVMGESLYNPMLPGIVADLKAKGLAVESEGATVVFLDEFKNKEGDPMGVIIQKKDGGYLYTTTDIACAKYRYETLHADRVLYYIDSRQHQHLMQAWTIVRKAGYVPDSVPLEHHMFGMMLGKDGKPFKTRAGGTVKLADLLDEALERARRLVAEKNPDMPADELEKLANAVGIGAVKYADLSKNRTTDYIFDWDNMLAFEGNTAPYMQYAYTRVLSVFRKADIDEQALASAPVIISEDREAQLAARLLQFEETLTVVAREGTPHVMCAYLYDVAGLFSGFYEHCPILSAENDAVRNSRLKLAQLTAKTLKLGLDTLGIETVERM</sequence>
<comment type="catalytic activity">
    <reaction evidence="1">
        <text>tRNA(Arg) + L-arginine + ATP = L-arginyl-tRNA(Arg) + AMP + diphosphate</text>
        <dbReference type="Rhea" id="RHEA:20301"/>
        <dbReference type="Rhea" id="RHEA-COMP:9658"/>
        <dbReference type="Rhea" id="RHEA-COMP:9673"/>
        <dbReference type="ChEBI" id="CHEBI:30616"/>
        <dbReference type="ChEBI" id="CHEBI:32682"/>
        <dbReference type="ChEBI" id="CHEBI:33019"/>
        <dbReference type="ChEBI" id="CHEBI:78442"/>
        <dbReference type="ChEBI" id="CHEBI:78513"/>
        <dbReference type="ChEBI" id="CHEBI:456215"/>
        <dbReference type="EC" id="6.1.1.19"/>
    </reaction>
</comment>
<comment type="subunit">
    <text evidence="1">Monomer.</text>
</comment>
<comment type="subcellular location">
    <subcellularLocation>
        <location evidence="1">Cytoplasm</location>
    </subcellularLocation>
</comment>
<comment type="similarity">
    <text evidence="1">Belongs to the class-I aminoacyl-tRNA synthetase family.</text>
</comment>
<reference key="1">
    <citation type="journal article" date="2011" name="J. Bacteriol.">
        <title>Comparative genomics of 28 Salmonella enterica isolates: evidence for CRISPR-mediated adaptive sublineage evolution.</title>
        <authorList>
            <person name="Fricke W.F."/>
            <person name="Mammel M.K."/>
            <person name="McDermott P.F."/>
            <person name="Tartera C."/>
            <person name="White D.G."/>
            <person name="Leclerc J.E."/>
            <person name="Ravel J."/>
            <person name="Cebula T.A."/>
        </authorList>
    </citation>
    <scope>NUCLEOTIDE SEQUENCE [LARGE SCALE GENOMIC DNA]</scope>
    <source>
        <strain>SL254</strain>
    </source>
</reference>
<accession>B4SVG0</accession>
<gene>
    <name evidence="1" type="primary">argS</name>
    <name type="ordered locus">SNSL254_A2069</name>
</gene>